<accession>Q00175</accession>
<accession>A6H6A5</accession>
<accession>E9QPW3</accession>
<name>PRGR_MOUSE</name>
<proteinExistence type="evidence at protein level"/>
<protein>
    <recommendedName>
        <fullName>Progesterone receptor</fullName>
        <shortName>PR</shortName>
    </recommendedName>
    <alternativeName>
        <fullName>Nuclear receptor subfamily 3 group C member 3</fullName>
    </alternativeName>
</protein>
<reference key="1">
    <citation type="journal article" date="1991" name="Biochemistry">
        <title>Molecular cloning, sequence analyses, and expression of complementary DNA encoding murine progesterone receptor.</title>
        <authorList>
            <person name="Schott D.R."/>
            <person name="Shyamala G."/>
            <person name="Schneider W."/>
            <person name="Parry G."/>
        </authorList>
    </citation>
    <scope>NUCLEOTIDE SEQUENCE [MRNA] (ISOFORM B)</scope>
</reference>
<reference key="2">
    <citation type="journal article" date="2009" name="PLoS Biol.">
        <title>Lineage-specific biology revealed by a finished genome assembly of the mouse.</title>
        <authorList>
            <person name="Church D.M."/>
            <person name="Goodstadt L."/>
            <person name="Hillier L.W."/>
            <person name="Zody M.C."/>
            <person name="Goldstein S."/>
            <person name="She X."/>
            <person name="Bult C.J."/>
            <person name="Agarwala R."/>
            <person name="Cherry J.L."/>
            <person name="DiCuccio M."/>
            <person name="Hlavina W."/>
            <person name="Kapustin Y."/>
            <person name="Meric P."/>
            <person name="Maglott D."/>
            <person name="Birtle Z."/>
            <person name="Marques A.C."/>
            <person name="Graves T."/>
            <person name="Zhou S."/>
            <person name="Teague B."/>
            <person name="Potamousis K."/>
            <person name="Churas C."/>
            <person name="Place M."/>
            <person name="Herschleb J."/>
            <person name="Runnheim R."/>
            <person name="Forrest D."/>
            <person name="Amos-Landgraf J."/>
            <person name="Schwartz D.C."/>
            <person name="Cheng Z."/>
            <person name="Lindblad-Toh K."/>
            <person name="Eichler E.E."/>
            <person name="Ponting C.P."/>
        </authorList>
    </citation>
    <scope>NUCLEOTIDE SEQUENCE [LARGE SCALE GENOMIC DNA]</scope>
    <source>
        <strain>C57BL/6J</strain>
    </source>
</reference>
<reference key="3">
    <citation type="submission" date="2014-09" db="EMBL/GenBank/DDBJ databases">
        <authorList>
            <person name="Mural R.J."/>
            <person name="Adams M.D."/>
            <person name="Myers E.W."/>
            <person name="Smith H.O."/>
            <person name="Venter J.C."/>
        </authorList>
    </citation>
    <scope>NUCLEOTIDE SEQUENCE [LARGE SCALE GENOMIC DNA]</scope>
    <source>
        <tissue>Brain</tissue>
    </source>
</reference>
<reference key="4">
    <citation type="journal article" date="2004" name="Genome Res.">
        <title>The status, quality, and expansion of the NIH full-length cDNA project: the Mammalian Gene Collection (MGC).</title>
        <authorList>
            <consortium name="The MGC Project Team"/>
        </authorList>
    </citation>
    <scope>NUCLEOTIDE SEQUENCE [LARGE SCALE MRNA] (ISOFORM B)</scope>
    <source>
        <tissue>Brain</tissue>
    </source>
</reference>
<reference key="5">
    <citation type="journal article" date="1994" name="Biochem. Biophys. Res. Commun.">
        <title>Nucleic acid sequence and DNase hypersensitive sites of the 5' region of the mouse progesterone receptor gene.</title>
        <authorList>
            <person name="Hagihara K."/>
            <person name="Wu-Peng X.S."/>
            <person name="Funabashi T."/>
            <person name="Kato J."/>
            <person name="Pfaff D.W."/>
        </authorList>
    </citation>
    <scope>NUCLEOTIDE SEQUENCE [GENOMIC DNA] OF 1-9</scope>
    <source>
        <strain>129/Sv</strain>
    </source>
</reference>
<reference key="6">
    <citation type="journal article" date="1996" name="J. Steroid Biochem. Mol. Biol.">
        <title>Reproductive phenotpes of the progesterone receptor null mutant mouse.</title>
        <authorList>
            <person name="Lydon J.P."/>
            <person name="DeMayo F.J."/>
            <person name="Conneely O.M."/>
            <person name="O'Malley B.W."/>
        </authorList>
    </citation>
    <scope>DISRUPTION PHENOTYPE</scope>
</reference>
<reference key="7">
    <citation type="journal article" date="2000" name="Science">
        <title>Subgroup of reproductive functions of progesterone mediated by progesterone receptor-B isoform.</title>
        <authorList>
            <person name="Mulac-Jericevic B."/>
            <person name="Mullinax R.A."/>
            <person name="DeMayo F.J."/>
            <person name="Lydon J.P."/>
            <person name="Conneely O.M."/>
        </authorList>
    </citation>
    <scope>FUNCTION (ISOFORM B)</scope>
    <scope>DISRUPTION PHENOTYPE (ISOFORMS A AND B)</scope>
</reference>
<reference key="8">
    <citation type="journal article" date="2003" name="J. Biol. Chem.">
        <title>Selective interactions of Kruppel-like factor 9/basic transcription element-binding protein with progesterone receptor isoforms A and B determine transcriptional activity of progesterone-responsive genes in endometrial epithelial cells.</title>
        <authorList>
            <person name="Zhang X.L."/>
            <person name="Zhang D."/>
            <person name="Michel F.J."/>
            <person name="Blum J.L."/>
            <person name="Simmen F.A."/>
            <person name="Simmen R.C."/>
        </authorList>
    </citation>
    <scope>INTERACTION WITH KLF9</scope>
</reference>
<reference key="9">
    <citation type="journal article" date="2004" name="Endocrinology">
        <title>Expression of progesterone receptors A and B in the mouse ovary during the estrous cycle.</title>
        <authorList>
            <person name="Gava N."/>
            <person name="Clarke C.L."/>
            <person name="Byth K."/>
            <person name="Arnett-Mansfield R.L."/>
            <person name="deFazio A."/>
        </authorList>
    </citation>
    <scope>TISSUE SPECIFICITY (ISOFORMS A AND B)</scope>
</reference>
<reference key="10">
    <citation type="journal article" date="2005" name="Endocrinology">
        <title>Progesterone receptor isoforms A and B: temporal and spatial differences in expression during murine mammary gland development.</title>
        <authorList>
            <person name="Aupperlee M.D."/>
            <person name="Smith K.T."/>
            <person name="Kariagina A."/>
            <person name="Haslam S.Z."/>
        </authorList>
    </citation>
    <scope>TISSUE SPECIFICITY (ISOFORMS A AND B)</scope>
</reference>
<reference key="11">
    <citation type="journal article" date="2006" name="J. Endocrinol.">
        <title>Differential expression and regulation of progesterone receptor isoforms in rat and mouse pituitary cells and LbetaT2 gonadotropes.</title>
        <authorList>
            <person name="Turgeon J.L."/>
            <person name="Waring D.W."/>
        </authorList>
    </citation>
    <scope>TISSUE SPECIFICITY (ISOFORMS A AND B)</scope>
</reference>
<dbReference type="EMBL" id="M68915">
    <property type="protein sequence ID" value="AAA39971.1"/>
    <property type="status" value="ALT_SEQ"/>
    <property type="molecule type" value="mRNA"/>
</dbReference>
<dbReference type="EMBL" id="AC113506">
    <property type="status" value="NOT_ANNOTATED_CDS"/>
    <property type="molecule type" value="Genomic_DNA"/>
</dbReference>
<dbReference type="EMBL" id="AC160964">
    <property type="status" value="NOT_ANNOTATED_CDS"/>
    <property type="molecule type" value="Genomic_DNA"/>
</dbReference>
<dbReference type="EMBL" id="CH466522">
    <property type="protein sequence ID" value="EDL24960.1"/>
    <property type="molecule type" value="Genomic_DNA"/>
</dbReference>
<dbReference type="EMBL" id="BC145807">
    <property type="protein sequence ID" value="AAI45808.1"/>
    <property type="molecule type" value="mRNA"/>
</dbReference>
<dbReference type="EMBL" id="U12644">
    <property type="protein sequence ID" value="AAA66067.1"/>
    <property type="molecule type" value="Genomic_DNA"/>
</dbReference>
<dbReference type="CCDS" id="CCDS22816.1">
    <molecule id="Q00175-1"/>
</dbReference>
<dbReference type="PIR" id="A39596">
    <property type="entry name" value="A39596"/>
</dbReference>
<dbReference type="RefSeq" id="NP_032855.2">
    <molecule id="Q00175-1"/>
    <property type="nucleotide sequence ID" value="NM_008829.2"/>
</dbReference>
<dbReference type="SMR" id="Q00175"/>
<dbReference type="FunCoup" id="Q00175">
    <property type="interactions" value="406"/>
</dbReference>
<dbReference type="IntAct" id="Q00175">
    <property type="interactions" value="5"/>
</dbReference>
<dbReference type="MINT" id="Q00175"/>
<dbReference type="STRING" id="10090.ENSMUSP00000140124"/>
<dbReference type="ChEMBL" id="CHEMBL4969"/>
<dbReference type="iPTMnet" id="Q00175"/>
<dbReference type="PhosphoSitePlus" id="Q00175"/>
<dbReference type="jPOST" id="Q00175"/>
<dbReference type="PaxDb" id="10090-ENSMUSP00000063562"/>
<dbReference type="ProteomicsDB" id="291877">
    <molecule id="Q00175-1"/>
</dbReference>
<dbReference type="ProteomicsDB" id="291878">
    <molecule id="Q00175-2"/>
</dbReference>
<dbReference type="Antibodypedia" id="1685">
    <property type="antibodies" value="3138 antibodies from 57 providers"/>
</dbReference>
<dbReference type="DNASU" id="18667"/>
<dbReference type="Ensembl" id="ENSMUST00000070463.10">
    <molecule id="Q00175-1"/>
    <property type="protein sequence ID" value="ENSMUSP00000063562.4"/>
    <property type="gene ID" value="ENSMUSG00000031870.17"/>
</dbReference>
<dbReference type="Ensembl" id="ENSMUST00000098986.4">
    <molecule id="Q00175-2"/>
    <property type="protein sequence ID" value="ENSMUSP00000096584.4"/>
    <property type="gene ID" value="ENSMUSG00000031870.17"/>
</dbReference>
<dbReference type="Ensembl" id="ENSMUST00000189181.7">
    <molecule id="Q00175-1"/>
    <property type="protein sequence ID" value="ENSMUSP00000140124.2"/>
    <property type="gene ID" value="ENSMUSG00000031870.17"/>
</dbReference>
<dbReference type="GeneID" id="18667"/>
<dbReference type="KEGG" id="mmu:18667"/>
<dbReference type="UCSC" id="uc009odo.1">
    <property type="organism name" value="mouse"/>
</dbReference>
<dbReference type="AGR" id="MGI:97567"/>
<dbReference type="CTD" id="5241"/>
<dbReference type="MGI" id="MGI:97567">
    <property type="gene designation" value="Pgr"/>
</dbReference>
<dbReference type="VEuPathDB" id="HostDB:ENSMUSG00000031870"/>
<dbReference type="eggNOG" id="KOG3575">
    <property type="taxonomic scope" value="Eukaryota"/>
</dbReference>
<dbReference type="GeneTree" id="ENSGT00940000159713"/>
<dbReference type="InParanoid" id="Q00175"/>
<dbReference type="OMA" id="PDLILNX"/>
<dbReference type="OrthoDB" id="8580220at2759"/>
<dbReference type="TreeFam" id="TF106510"/>
<dbReference type="Reactome" id="R-MMU-3371497">
    <property type="pathway name" value="HSP90 chaperone cycle for steroid hormone receptors (SHR) in the presence of ligand"/>
</dbReference>
<dbReference type="Reactome" id="R-MMU-383280">
    <property type="pathway name" value="Nuclear Receptor transcription pathway"/>
</dbReference>
<dbReference type="Reactome" id="R-MMU-4090294">
    <property type="pathway name" value="SUMOylation of intracellular receptors"/>
</dbReference>
<dbReference type="Reactome" id="R-MMU-9018519">
    <property type="pathway name" value="Estrogen-dependent gene expression"/>
</dbReference>
<dbReference type="BioGRID-ORCS" id="18667">
    <property type="hits" value="2 hits in 81 CRISPR screens"/>
</dbReference>
<dbReference type="PRO" id="PR:Q00175"/>
<dbReference type="Proteomes" id="UP000000589">
    <property type="component" value="Chromosome 9"/>
</dbReference>
<dbReference type="RNAct" id="Q00175">
    <property type="molecule type" value="protein"/>
</dbReference>
<dbReference type="Bgee" id="ENSMUSG00000031870">
    <property type="expression patterns" value="Expressed in gastrula and 126 other cell types or tissues"/>
</dbReference>
<dbReference type="GO" id="GO:0000785">
    <property type="term" value="C:chromatin"/>
    <property type="evidence" value="ECO:0000305"/>
    <property type="project" value="MGI"/>
</dbReference>
<dbReference type="GO" id="GO:0005737">
    <property type="term" value="C:cytoplasm"/>
    <property type="evidence" value="ECO:0007669"/>
    <property type="project" value="UniProtKB-SubCell"/>
</dbReference>
<dbReference type="GO" id="GO:0005634">
    <property type="term" value="C:nucleus"/>
    <property type="evidence" value="ECO:0000305"/>
    <property type="project" value="MGI"/>
</dbReference>
<dbReference type="GO" id="GO:0005886">
    <property type="term" value="C:plasma membrane"/>
    <property type="evidence" value="ECO:0007669"/>
    <property type="project" value="Ensembl"/>
</dbReference>
<dbReference type="GO" id="GO:0051117">
    <property type="term" value="F:ATPase binding"/>
    <property type="evidence" value="ECO:0000266"/>
    <property type="project" value="MGI"/>
</dbReference>
<dbReference type="GO" id="GO:0001228">
    <property type="term" value="F:DNA-binding transcription activator activity, RNA polymerase II-specific"/>
    <property type="evidence" value="ECO:0000314"/>
    <property type="project" value="MGI"/>
</dbReference>
<dbReference type="GO" id="GO:0042802">
    <property type="term" value="F:identical protein binding"/>
    <property type="evidence" value="ECO:0007669"/>
    <property type="project" value="Ensembl"/>
</dbReference>
<dbReference type="GO" id="GO:0004879">
    <property type="term" value="F:nuclear receptor activity"/>
    <property type="evidence" value="ECO:0000315"/>
    <property type="project" value="MGI"/>
</dbReference>
<dbReference type="GO" id="GO:0003707">
    <property type="term" value="F:nuclear steroid receptor activity"/>
    <property type="evidence" value="ECO:0000314"/>
    <property type="project" value="MGI"/>
</dbReference>
<dbReference type="GO" id="GO:0000978">
    <property type="term" value="F:RNA polymerase II cis-regulatory region sequence-specific DNA binding"/>
    <property type="evidence" value="ECO:0007669"/>
    <property type="project" value="Ensembl"/>
</dbReference>
<dbReference type="GO" id="GO:0005496">
    <property type="term" value="F:steroid binding"/>
    <property type="evidence" value="ECO:0007669"/>
    <property type="project" value="UniProtKB-KW"/>
</dbReference>
<dbReference type="GO" id="GO:0000976">
    <property type="term" value="F:transcription cis-regulatory region binding"/>
    <property type="evidence" value="ECO:0000314"/>
    <property type="project" value="MGI"/>
</dbReference>
<dbReference type="GO" id="GO:0001223">
    <property type="term" value="F:transcription coactivator binding"/>
    <property type="evidence" value="ECO:0007669"/>
    <property type="project" value="Ensembl"/>
</dbReference>
<dbReference type="GO" id="GO:0008270">
    <property type="term" value="F:zinc ion binding"/>
    <property type="evidence" value="ECO:0007669"/>
    <property type="project" value="UniProtKB-KW"/>
</dbReference>
<dbReference type="GO" id="GO:0002070">
    <property type="term" value="P:epithelial cell maturation"/>
    <property type="evidence" value="ECO:0000315"/>
    <property type="project" value="MGI"/>
</dbReference>
<dbReference type="GO" id="GO:0002071">
    <property type="term" value="P:glandular epithelial cell maturation"/>
    <property type="evidence" value="ECO:0000315"/>
    <property type="project" value="MGI"/>
</dbReference>
<dbReference type="GO" id="GO:0048286">
    <property type="term" value="P:lung alveolus development"/>
    <property type="evidence" value="ECO:0000315"/>
    <property type="project" value="MGI"/>
</dbReference>
<dbReference type="GO" id="GO:0051457">
    <property type="term" value="P:maintenance of protein location in nucleus"/>
    <property type="evidence" value="ECO:0007669"/>
    <property type="project" value="Ensembl"/>
</dbReference>
<dbReference type="GO" id="GO:0030879">
    <property type="term" value="P:mammary gland development"/>
    <property type="evidence" value="ECO:0000315"/>
    <property type="project" value="MGI"/>
</dbReference>
<dbReference type="GO" id="GO:0010629">
    <property type="term" value="P:negative regulation of gene expression"/>
    <property type="evidence" value="ECO:0007669"/>
    <property type="project" value="Ensembl"/>
</dbReference>
<dbReference type="GO" id="GO:0001542">
    <property type="term" value="P:ovulation from ovarian follicle"/>
    <property type="evidence" value="ECO:0000315"/>
    <property type="project" value="MGI"/>
</dbReference>
<dbReference type="GO" id="GO:0038001">
    <property type="term" value="P:paracrine signaling"/>
    <property type="evidence" value="ECO:0000315"/>
    <property type="project" value="MGI"/>
</dbReference>
<dbReference type="GO" id="GO:0045893">
    <property type="term" value="P:positive regulation of DNA-templated transcription"/>
    <property type="evidence" value="ECO:0000314"/>
    <property type="project" value="MGI"/>
</dbReference>
<dbReference type="GO" id="GO:0050847">
    <property type="term" value="P:progesterone receptor signaling pathway"/>
    <property type="evidence" value="ECO:0000314"/>
    <property type="project" value="MGI"/>
</dbReference>
<dbReference type="GO" id="GO:0006355">
    <property type="term" value="P:regulation of DNA-templated transcription"/>
    <property type="evidence" value="ECO:0000315"/>
    <property type="project" value="MGI"/>
</dbReference>
<dbReference type="GO" id="GO:0050678">
    <property type="term" value="P:regulation of epithelial cell proliferation"/>
    <property type="evidence" value="ECO:0000315"/>
    <property type="project" value="MGI"/>
</dbReference>
<dbReference type="GO" id="GO:0060748">
    <property type="term" value="P:tertiary branching involved in mammary gland duct morphogenesis"/>
    <property type="evidence" value="ECO:0000315"/>
    <property type="project" value="MGI"/>
</dbReference>
<dbReference type="CDD" id="cd07172">
    <property type="entry name" value="NR_DBD_GR_PR"/>
    <property type="match status" value="1"/>
</dbReference>
<dbReference type="CDD" id="cd07074">
    <property type="entry name" value="NR_LBD_PR"/>
    <property type="match status" value="1"/>
</dbReference>
<dbReference type="FunFam" id="1.10.565.10:FF:000004">
    <property type="entry name" value="Androgen receptor variant"/>
    <property type="match status" value="1"/>
</dbReference>
<dbReference type="FunFam" id="3.30.50.10:FF:000027">
    <property type="entry name" value="Progesterone receptor"/>
    <property type="match status" value="1"/>
</dbReference>
<dbReference type="Gene3D" id="3.30.50.10">
    <property type="entry name" value="Erythroid Transcription Factor GATA-1, subunit A"/>
    <property type="match status" value="1"/>
</dbReference>
<dbReference type="Gene3D" id="1.10.565.10">
    <property type="entry name" value="Retinoid X Receptor"/>
    <property type="match status" value="1"/>
</dbReference>
<dbReference type="InterPro" id="IPR035500">
    <property type="entry name" value="NHR-like_dom_sf"/>
</dbReference>
<dbReference type="InterPro" id="IPR000536">
    <property type="entry name" value="Nucl_hrmn_rcpt_lig-bd"/>
</dbReference>
<dbReference type="InterPro" id="IPR050200">
    <property type="entry name" value="Nuclear_hormone_rcpt_NR3"/>
</dbReference>
<dbReference type="InterPro" id="IPR001723">
    <property type="entry name" value="Nuclear_hrmn_rcpt"/>
</dbReference>
<dbReference type="InterPro" id="IPR000128">
    <property type="entry name" value="Progest_rcpt"/>
</dbReference>
<dbReference type="InterPro" id="IPR001628">
    <property type="entry name" value="Znf_hrmn_rcpt"/>
</dbReference>
<dbReference type="InterPro" id="IPR013088">
    <property type="entry name" value="Znf_NHR/GATA"/>
</dbReference>
<dbReference type="PANTHER" id="PTHR48092">
    <property type="entry name" value="KNIRPS-RELATED PROTEIN-RELATED"/>
    <property type="match status" value="1"/>
</dbReference>
<dbReference type="Pfam" id="PF00104">
    <property type="entry name" value="Hormone_recep"/>
    <property type="match status" value="1"/>
</dbReference>
<dbReference type="Pfam" id="PF02161">
    <property type="entry name" value="Prog_receptor"/>
    <property type="match status" value="1"/>
</dbReference>
<dbReference type="Pfam" id="PF00105">
    <property type="entry name" value="zf-C4"/>
    <property type="match status" value="1"/>
</dbReference>
<dbReference type="PRINTS" id="PR00544">
    <property type="entry name" value="PROGESTRONER"/>
</dbReference>
<dbReference type="PRINTS" id="PR00398">
    <property type="entry name" value="STRDHORMONER"/>
</dbReference>
<dbReference type="PRINTS" id="PR00047">
    <property type="entry name" value="STROIDFINGER"/>
</dbReference>
<dbReference type="SMART" id="SM00430">
    <property type="entry name" value="HOLI"/>
    <property type="match status" value="1"/>
</dbReference>
<dbReference type="SMART" id="SM00399">
    <property type="entry name" value="ZnF_C4"/>
    <property type="match status" value="1"/>
</dbReference>
<dbReference type="SUPFAM" id="SSF57716">
    <property type="entry name" value="Glucocorticoid receptor-like (DNA-binding domain)"/>
    <property type="match status" value="1"/>
</dbReference>
<dbReference type="SUPFAM" id="SSF48508">
    <property type="entry name" value="Nuclear receptor ligand-binding domain"/>
    <property type="match status" value="1"/>
</dbReference>
<dbReference type="PROSITE" id="PS51843">
    <property type="entry name" value="NR_LBD"/>
    <property type="match status" value="1"/>
</dbReference>
<dbReference type="PROSITE" id="PS00031">
    <property type="entry name" value="NUCLEAR_REC_DBD_1"/>
    <property type="match status" value="1"/>
</dbReference>
<dbReference type="PROSITE" id="PS51030">
    <property type="entry name" value="NUCLEAR_REC_DBD_2"/>
    <property type="match status" value="1"/>
</dbReference>
<keyword id="KW-0877">Alternative promoter usage</keyword>
<keyword id="KW-0963">Cytoplasm</keyword>
<keyword id="KW-0238">DNA-binding</keyword>
<keyword id="KW-1017">Isopeptide bond</keyword>
<keyword id="KW-0446">Lipid-binding</keyword>
<keyword id="KW-0449">Lipoprotein</keyword>
<keyword id="KW-0479">Metal-binding</keyword>
<keyword id="KW-0539">Nucleus</keyword>
<keyword id="KW-0564">Palmitate</keyword>
<keyword id="KW-0597">Phosphoprotein</keyword>
<keyword id="KW-0675">Receptor</keyword>
<keyword id="KW-1185">Reference proteome</keyword>
<keyword id="KW-0754">Steroid-binding</keyword>
<keyword id="KW-0804">Transcription</keyword>
<keyword id="KW-0805">Transcription regulation</keyword>
<keyword id="KW-0832">Ubl conjugation</keyword>
<keyword id="KW-0862">Zinc</keyword>
<keyword id="KW-0863">Zinc-finger</keyword>
<sequence>MTELQAKDPQVLHTSGASPSPPHIGSPLLARLDSGPFQGSQHSDVSSVVSPIPISLDGLLFPRSCRGPELPDGKTGDQQSLSDVEGAFSGVEATHREGGRNSRAPEKDSRLLDSVLDSLLTPSGTEQSHASPPACEAITSWCLFGPELPEDPRSVPATKGLLSPLMSRPEIKAGDSSGTGAGQKVLPKGLSPPRQLLLPTSGSAHWPGAGVKPSPQPAAGEVEEDSGLETEGSAAPLLKSKPRALEGTGSGGGVAANAASAAPGGVTLVPKEDSRFSAPRVSLEQDSPIAPGRSPLATTVVDFIHVPILPLNHALLAARTRQLLEGDSYDGGATAQGPFAPPRGSPSAPSPPVPCGDFPDCTYPLEGDPKEDVFPLYGDFQTPGLKIKEEEEGADAAVRSPRPYLSAGASSSTFPDFPLAPAPQRAPSSRPGEAAVAGGPSSAAVSPASSSGSALECILYKAEGAPPTQGSFAPLPCKPPAAGSCLLPRDSLPAAPATAAAPAIYQPLGLNGLPQLGYQAAVLKDSLPQVYPPYLNYLRPDSEASQSPQYGFDSLPQKICLICGDEASGCHYGVLTCGSCKVFFKRAMEGQHNYLCAGRNDCIVDKIRRKNCPACRLRKCCQAGMVLGGRKFKKFNKVRVMRTLDGVALPQSVGLPNESQALGQRITFSPNQEIQLVPPLINLLMSIEPDVVYAGHDNTKPDTSSSLLTSLNQLGERQLLSVVKWSKSLPGFRNLHIDDQITLIQYSWMSLMVFGLGWRSYKHVSGQMLYFAPDLILNEQRMKELSFYSLCLTMWQIPQEFVKLQVTHEEFLCMKVLLLLNTIPLEGLRSQSQFEEMRSSYIRELIKAIGLRQKGVVPSSQRFYQLTKLLDSLHDLVKQLHLYCLNTFIQSRTLAVEFPEMMSEVIAAQLPKILAGMVKPLLFHKK</sequence>
<organism>
    <name type="scientific">Mus musculus</name>
    <name type="common">Mouse</name>
    <dbReference type="NCBI Taxonomy" id="10090"/>
    <lineage>
        <taxon>Eukaryota</taxon>
        <taxon>Metazoa</taxon>
        <taxon>Chordata</taxon>
        <taxon>Craniata</taxon>
        <taxon>Vertebrata</taxon>
        <taxon>Euteleostomi</taxon>
        <taxon>Mammalia</taxon>
        <taxon>Eutheria</taxon>
        <taxon>Euarchontoglires</taxon>
        <taxon>Glires</taxon>
        <taxon>Rodentia</taxon>
        <taxon>Myomorpha</taxon>
        <taxon>Muroidea</taxon>
        <taxon>Muridae</taxon>
        <taxon>Murinae</taxon>
        <taxon>Mus</taxon>
        <taxon>Mus</taxon>
    </lineage>
</organism>
<comment type="function">
    <text evidence="2">The steroid hormones and their receptors are involved in the regulation of eukaryotic gene expression and affect cellular proliferation and differentiation in target tissues. Depending on the isoform, progesterone receptor functions as a transcriptional activator or repressor.</text>
</comment>
<comment type="function">
    <molecule>Isoform A</molecule>
    <text evidence="2">Ligand-dependent transdominant repressor of steroid hormone receptor transcriptional activity including repression of its isoform B, MR and ER. Transrepressional activity may involve recruitment of corepressor NCOR2.</text>
</comment>
<comment type="function">
    <molecule>Isoform B</molecule>
    <text evidence="2">Transcriptional activator of several progesteron-dependent promoters in a variety of cell types. Involved in activation of SRC-dependent MAPK signaling on hormone stimulation.</text>
</comment>
<comment type="subunit">
    <text evidence="2 8">Interacts with SMARD1 and UNC45A. Interacts with CUEDC2; the interaction promotes ubiquitination, decreases sumoylation, and represses transcriptional activity. Interacts with PIAS3; the interaction promotes sumoylation of PR in a hormone-dependent manner, inhibits DNA-binding, and alters nuclear export. Interacts with SP1; the interaction requires ligand-induced phosphorylation on Ser-294 by ERK1/2 MAPK. Interacts with PRMT2 (By similarity). Isoform A interacts with NCOR2. Isoform B (but not isoform A) interacts with NCOA2 and NCOA1. Isoform B (but not isoform A) interacts with KLF9.</text>
</comment>
<comment type="interaction">
    <interactant intactId="EBI-346821">
        <id>Q00175</id>
    </interactant>
    <interactant intactId="EBI-346765">
        <id>P19785</id>
        <label>Esr1</label>
    </interactant>
    <organismsDiffer>false</organismsDiffer>
    <experiments>5</experiments>
</comment>
<comment type="interaction">
    <interactant intactId="EBI-346821">
        <id>Q00175</id>
    </interactant>
    <interactant intactId="EBI-602878">
        <id>P42227</id>
        <label>Stat3</label>
    </interactant>
    <organismsDiffer>false</organismsDiffer>
    <experiments>4</experiments>
</comment>
<comment type="subcellular location">
    <subcellularLocation>
        <location>Nucleus</location>
    </subcellularLocation>
    <subcellularLocation>
        <location>Cytoplasm</location>
    </subcellularLocation>
    <text evidence="1">Nucleoplasmic shuttling is both hormone- and cell cycle-dependent. On hormone stimulation, retained in the cytoplasm in the G(1) and G(2)/M phases (By similarity).</text>
</comment>
<comment type="alternative products">
    <event type="alternative promoter"/>
    <isoform>
        <id>Q00175-1</id>
        <name>B</name>
        <name>PRB</name>
        <name>PR-B</name>
        <sequence type="displayed"/>
    </isoform>
    <isoform>
        <id>Q00175-2</id>
        <name>A</name>
        <name>PRA</name>
        <name>PR-A</name>
        <sequence type="described" ref="VSP_058743"/>
    </isoform>
</comment>
<comment type="tissue specificity">
    <text evidence="9 10 11">Expression of isoform A and isoform B in mammary epithelial cells is temporally and spatially separated during normal mammary gland development. Isoform A and isoform B are expressed in the pituitary. Isoform A and isoform B are differentially expressed in the ovary and oviduct, and the level of expression is dependent on both the cell type and estrous cycle stage.</text>
</comment>
<comment type="domain">
    <text>Composed of three domains: a modulating N-terminal domain, a DNA-binding domain and a C-terminal ligand-binding domain.</text>
</comment>
<comment type="PTM">
    <text evidence="1">Phosphorylated on multiple serine sites. Several of these sites are hormone-dependent. Phosphorylation on Ser-294 is highly hormone-dependent and modulates ubiquitination and sumoylation on Lys-388. Phosphorylation on Ser-345 also requires induction by hormone. Basal phosphorylation on Ser-82, Ser-163, Ser-191 and Ser-400 is increased in response to progesterone and can be phosphorylated in vitro by the CDK2-A1 complex. Increased levels of phosphorylation on Ser-400 also in the presence of EGF, heregulin, IGF, PMA and FBS. Phosphorylation at this site by CDK2 is ligand-independent, and increases nuclear translocation and transcriptional activity. Phosphorylation at Ser-163 and Ser-294, but not at Ser-191, is impaired during the G(2)/M phase of the cell cycle. Phosphorylation on Ser-345 by ERK1/2 MAPK is required for interaction with SP1 (By similarity).</text>
</comment>
<comment type="PTM">
    <text evidence="1">Sumoylation is hormone-dependent and represses transcriptional activity. Sumoylation on all three sites is enhanced by PIAS3. Desumoylated by SENP1. Sumoylation on Lys-388, the main site of sumoylation, is repressed by ubiquitination on the same site, and modulated by phosphorylation at Ser-294 (By similarity).</text>
</comment>
<comment type="PTM">
    <text evidence="2">Ubiquitination is hormone-dependent and represses sumoylation on the same site (By similarity). Promoted by MAPK-mediated phosphorylation on Ser-294 (By similarity). Ubiquitinated by UBR5, leading to its degradation: UBR5 specifically recognizes and binds ligand-bound PGR when it is not associated with coactivators (NCOAs) (By similarity). In presence of NCOAs, the UBR5-degron is not accessible, preventing its ubiquitination and degradation (By similarity).</text>
</comment>
<comment type="PTM">
    <text evidence="1">Palmitoylated by ZDHHC7 and ZDHHC21. Palmitoylation is required for plasma membrane targeting and for rapid intracellular signaling via ERK and AKT kinases and cAMP generation (By similarity).</text>
</comment>
<comment type="disruption phenotype">
    <text evidence="7 12">Infertile. Inability to ovulate, uterine hyperplasia and inflammation, severely limited mammary gland development and an impairment in the induction of a sexual behavioral response (PubMed:8603049). In isoform A-defective mice less oocytes are produced, only a subset of implantation-specific uterine epithelial target genes is regulated, and an increased progesterone-dependent proliferative activity of isoform B in the uterine epithelium is observed. Isoform B-defective mice showed unaffected ovulation (PubMed:10976068).</text>
</comment>
<comment type="similarity">
    <text evidence="13">Belongs to the nuclear hormone receptor family. NR3 subfamily.</text>
</comment>
<comment type="sequence caution" evidence="13">
    <conflict type="frameshift">
        <sequence resource="EMBL-CDS" id="AAA39971"/>
    </conflict>
</comment>
<feature type="chain" id="PRO_0000053695" description="Progesterone receptor">
    <location>
        <begin position="1"/>
        <end position="926"/>
    </location>
</feature>
<feature type="domain" description="NR LBD" evidence="5">
    <location>
        <begin position="672"/>
        <end position="906"/>
    </location>
</feature>
<feature type="DNA-binding region" description="Nuclear receptor" evidence="4">
    <location>
        <begin position="557"/>
        <end position="632"/>
    </location>
</feature>
<feature type="zinc finger region" description="NR C4-type" evidence="4">
    <location>
        <begin position="560"/>
        <end position="580"/>
    </location>
</feature>
<feature type="zinc finger region" description="NR C4-type" evidence="4">
    <location>
        <begin position="596"/>
        <end position="615"/>
    </location>
</feature>
<feature type="region of interest" description="Modulating, Pro-Rich">
    <location>
        <begin position="1"/>
        <end position="559"/>
    </location>
</feature>
<feature type="region of interest" description="AF3; mediates transcriptional activation (in isoform B)" evidence="2">
    <location>
        <begin position="1"/>
        <end position="165"/>
    </location>
</feature>
<feature type="region of interest" description="Disordered" evidence="6">
    <location>
        <begin position="1"/>
        <end position="48"/>
    </location>
</feature>
<feature type="region of interest" description="Mediates transcriptional transrepression (in isoform A)" evidence="2">
    <location>
        <begin position="166"/>
        <end position="305"/>
    </location>
</feature>
<feature type="region of interest" description="Disordered" evidence="6">
    <location>
        <begin position="168"/>
        <end position="256"/>
    </location>
</feature>
<feature type="region of interest" description="Disordered" evidence="6">
    <location>
        <begin position="327"/>
        <end position="364"/>
    </location>
</feature>
<feature type="region of interest" description="Disordered" evidence="6">
    <location>
        <begin position="391"/>
        <end position="447"/>
    </location>
</feature>
<feature type="region of interest" description="AF1; mediates transcriptional activation" evidence="2">
    <location>
        <begin position="453"/>
        <end position="539"/>
    </location>
</feature>
<feature type="region of interest" description="AF2; mediates transcriptional activation" evidence="2">
    <location>
        <begin position="673"/>
        <end position="926"/>
    </location>
</feature>
<feature type="short sequence motif" description="LXXL motif 1" evidence="2">
    <location>
        <begin position="56"/>
        <end position="60"/>
    </location>
</feature>
<feature type="short sequence motif" description="LXXL motif 1" evidence="2">
    <location>
        <begin position="116"/>
        <end position="120"/>
    </location>
</feature>
<feature type="short sequence motif" description="Nuclear localization signal" evidence="3">
    <location>
        <begin position="184"/>
        <end position="188"/>
    </location>
</feature>
<feature type="compositionally biased region" description="Pro residues" evidence="6">
    <location>
        <begin position="339"/>
        <end position="354"/>
    </location>
</feature>
<feature type="compositionally biased region" description="Low complexity" evidence="6">
    <location>
        <begin position="422"/>
        <end position="447"/>
    </location>
</feature>
<feature type="binding site" evidence="2">
    <location>
        <position position="759"/>
    </location>
    <ligand>
        <name>progesterone</name>
        <dbReference type="ChEBI" id="CHEBI:17026"/>
    </ligand>
</feature>
<feature type="modified residue" description="Phosphoserine" evidence="2">
    <location>
        <position position="20"/>
    </location>
</feature>
<feature type="modified residue" description="Phosphoserine" evidence="2">
    <location>
        <position position="82"/>
    </location>
</feature>
<feature type="modified residue" description="Phosphoserine" evidence="2">
    <location>
        <position position="131"/>
    </location>
</feature>
<feature type="modified residue" description="Phosphoserine" evidence="2">
    <location>
        <position position="163"/>
    </location>
</feature>
<feature type="modified residue" description="Phosphoserine" evidence="2">
    <location>
        <position position="191"/>
    </location>
</feature>
<feature type="modified residue" description="Phosphoserine" evidence="2">
    <location>
        <position position="214"/>
    </location>
</feature>
<feature type="modified residue" description="Phosphoserine; by MAPK1" evidence="2">
    <location>
        <position position="294"/>
    </location>
</feature>
<feature type="modified residue" description="Phosphoserine; by MAPK" evidence="2">
    <location>
        <position position="345"/>
    </location>
</feature>
<feature type="modified residue" description="Phosphoserine; by CDK2" evidence="2">
    <location>
        <position position="400"/>
    </location>
</feature>
<feature type="modified residue" description="Phosphoserine" evidence="2">
    <location>
        <position position="669"/>
    </location>
</feature>
<feature type="cross-link" description="Glycyl lysine isopeptide (Lys-Gly) (interchain with G-Cter in SUMO)" evidence="1">
    <location>
        <position position="7"/>
    </location>
</feature>
<feature type="cross-link" description="Glycyl lysine isopeptide (Lys-Gly) (interchain with G-Cter in SUMO); alternate" evidence="1">
    <location>
        <position position="388"/>
    </location>
</feature>
<feature type="cross-link" description="Glycyl lysine isopeptide (Lys-Gly) (interchain with G-Cter in ubiquitin); alternate" evidence="2">
    <location>
        <position position="388"/>
    </location>
</feature>
<feature type="cross-link" description="Glycyl lysine isopeptide (Lys-Gly) (interchain with G-Cter in SUMO)" evidence="1">
    <location>
        <position position="524"/>
    </location>
</feature>
<feature type="splice variant" id="VSP_058743" description="In isoform A." evidence="13">
    <location>
        <begin position="1"/>
        <end position="165"/>
    </location>
</feature>
<feature type="sequence conflict" description="In Ref. 1; AAA39971." evidence="13" ref="1">
    <original>A</original>
    <variation>P</variation>
    <location>
        <position position="104"/>
    </location>
</feature>
<feature type="sequence conflict" description="In Ref. 1; AAA39971." evidence="13" ref="1">
    <original>T</original>
    <variation>P</variation>
    <location>
        <position position="125"/>
    </location>
</feature>
<feature type="sequence conflict" description="In Ref. 1; AAA39971." evidence="13" ref="1">
    <original>AGDSSGTGA</original>
    <variation>VGDQSGTGR</variation>
    <location>
        <begin position="173"/>
        <end position="181"/>
    </location>
</feature>
<feature type="sequence conflict" description="In Ref. 1; AAA39971." evidence="13" ref="1">
    <original>A</original>
    <variation>S</variation>
    <location>
        <position position="235"/>
    </location>
</feature>
<feature type="sequence conflict" description="In Ref. 1; AAA39971." evidence="13" ref="1">
    <original>S</original>
    <variation>Q</variation>
    <location>
        <position position="250"/>
    </location>
</feature>
<feature type="sequence conflict" description="In Ref. 1; AAA39971." evidence="13" ref="1">
    <original>A</original>
    <variation>P</variation>
    <location>
        <position position="259"/>
    </location>
</feature>
<feature type="sequence conflict" description="In Ref. 1; AAA39971." evidence="13" ref="1">
    <original>D</original>
    <variation>E</variation>
    <location>
        <position position="327"/>
    </location>
</feature>
<feature type="sequence conflict" description="In Ref. 1; AAA39971." evidence="13" ref="1">
    <original>PPVPC</original>
    <variation>TPVPR</variation>
    <location>
        <begin position="351"/>
        <end position="355"/>
    </location>
</feature>
<feature type="sequence conflict" description="In Ref. 1; AAA39971." evidence="13" ref="1">
    <original>R</original>
    <variation>A</variation>
    <location>
        <position position="425"/>
    </location>
</feature>
<feature type="sequence conflict" description="In Ref. 1; AAA39971." evidence="13" ref="1">
    <location>
        <position position="464"/>
    </location>
</feature>
<feature type="sequence conflict" description="In Ref. 1; AAA39971." evidence="13" ref="1">
    <original>G</original>
    <variation>A</variation>
    <location>
        <position position="483"/>
    </location>
</feature>
<feature type="sequence conflict" description="In Ref. 1; AAA39971." evidence="13" ref="1">
    <original>A</original>
    <variation>G</variation>
    <location>
        <position position="497"/>
    </location>
</feature>
<feature type="sequence conflict" description="In Ref. 1; AAA39971." evidence="13" ref="1">
    <original>G</original>
    <variation>S</variation>
    <location>
        <position position="663"/>
    </location>
</feature>
<feature type="sequence conflict" description="In Ref. 1; AAA39971." evidence="13" ref="1">
    <original>V</original>
    <variation>I</variation>
    <location>
        <position position="692"/>
    </location>
</feature>
<feature type="sequence conflict" description="In Ref. 1; AAA39971." evidence="13" ref="1">
    <original>S</original>
    <variation>T</variation>
    <location>
        <position position="859"/>
    </location>
</feature>
<evidence type="ECO:0000250" key="1"/>
<evidence type="ECO:0000250" key="2">
    <source>
        <dbReference type="UniProtKB" id="P06401"/>
    </source>
</evidence>
<evidence type="ECO:0000255" key="3"/>
<evidence type="ECO:0000255" key="4">
    <source>
        <dbReference type="PROSITE-ProRule" id="PRU00407"/>
    </source>
</evidence>
<evidence type="ECO:0000255" key="5">
    <source>
        <dbReference type="PROSITE-ProRule" id="PRU01189"/>
    </source>
</evidence>
<evidence type="ECO:0000256" key="6">
    <source>
        <dbReference type="SAM" id="MobiDB-lite"/>
    </source>
</evidence>
<evidence type="ECO:0000269" key="7">
    <source>
    </source>
</evidence>
<evidence type="ECO:0000269" key="8">
    <source>
    </source>
</evidence>
<evidence type="ECO:0000269" key="9">
    <source>
    </source>
</evidence>
<evidence type="ECO:0000269" key="10">
    <source>
    </source>
</evidence>
<evidence type="ECO:0000269" key="11">
    <source>
    </source>
</evidence>
<evidence type="ECO:0000269" key="12">
    <source>
    </source>
</evidence>
<evidence type="ECO:0000305" key="13"/>
<gene>
    <name type="primary">Pgr</name>
    <name type="synonym">Nr3c3</name>
    <name type="synonym">Pr</name>
</gene>